<evidence type="ECO:0000250" key="1"/>
<evidence type="ECO:0000250" key="2">
    <source>
        <dbReference type="UniProtKB" id="P0A1P6"/>
    </source>
</evidence>
<evidence type="ECO:0000250" key="3">
    <source>
        <dbReference type="UniProtKB" id="P12425"/>
    </source>
</evidence>
<evidence type="ECO:0000250" key="4">
    <source>
        <dbReference type="UniProtKB" id="P77961"/>
    </source>
</evidence>
<evidence type="ECO:0000250" key="5">
    <source>
        <dbReference type="UniProtKB" id="P9WN39"/>
    </source>
</evidence>
<evidence type="ECO:0000250" key="6">
    <source>
        <dbReference type="UniProtKB" id="Q3V5W6"/>
    </source>
</evidence>
<evidence type="ECO:0000255" key="7">
    <source>
        <dbReference type="PROSITE-ProRule" id="PRU01330"/>
    </source>
</evidence>
<evidence type="ECO:0000255" key="8">
    <source>
        <dbReference type="PROSITE-ProRule" id="PRU01331"/>
    </source>
</evidence>
<evidence type="ECO:0000305" key="9"/>
<proteinExistence type="inferred from homology"/>
<protein>
    <recommendedName>
        <fullName evidence="2">Glutamine synthetase</fullName>
        <shortName evidence="2">GS</shortName>
        <ecNumber evidence="2">6.3.1.2</ecNumber>
    </recommendedName>
    <alternativeName>
        <fullName evidence="9">Glutamate--ammonia ligase</fullName>
    </alternativeName>
    <alternativeName>
        <fullName evidence="2">Glutamine synthetase I beta</fullName>
        <shortName evidence="2">GSI beta</shortName>
    </alternativeName>
</protein>
<sequence length="469" mass="51904">MSAEHVLTMLNEHEVKFVDLRFTDTKGKEQHVTIPAHQVNAEFFEEGKMFDGSSIGGWKGINESDMVLMPDASTAVIDPFFADSTLIIRCDILEPGTLQGYDRDPRSIAKRAEDYLRSTGIADTVLFGPEPEFFLFDDIRFGSSISGSHVAIDDIEGAWNSSTQYEGGNKGHRPAVKGGYFPVPPVDSAQDIRSEMCLVMEQMGLVVEAHHHEVATAGQNEVATRFNTMTKKADEIQIYKYVVHNVAHRFGKTATFMPKPMFGDNGSGMHCHMSLSKNGVNLFAGDKYAGLSEQALYYIGGVIKHAKAINALANPTTNSYKRLVPGYEAPVMLAYSARNRSASIRIPVVSSPKARRIEVRFPDPAANPYLCFAALLMAGLDGIKNKIHPGEAMDKNLYDLPPEEAKEIPQVAGSLEEALNELDLDREFLKAGGVFTDEAIDAYIALRREEDDRVRMTPHPVEFELYYSV</sequence>
<name>GLN1B_SHIFL</name>
<keyword id="KW-0067">ATP-binding</keyword>
<keyword id="KW-0963">Cytoplasm</keyword>
<keyword id="KW-0436">Ligase</keyword>
<keyword id="KW-0460">Magnesium</keyword>
<keyword id="KW-0479">Metal-binding</keyword>
<keyword id="KW-0547">Nucleotide-binding</keyword>
<keyword id="KW-0597">Phosphoprotein</keyword>
<keyword id="KW-1185">Reference proteome</keyword>
<comment type="function">
    <text evidence="2">Catalyzes the ATP-dependent biosynthesis of glutamine from glutamate and ammonia.</text>
</comment>
<comment type="catalytic activity">
    <reaction evidence="2">
        <text>L-glutamate + NH4(+) + ATP = L-glutamine + ADP + phosphate + H(+)</text>
        <dbReference type="Rhea" id="RHEA:16169"/>
        <dbReference type="ChEBI" id="CHEBI:15378"/>
        <dbReference type="ChEBI" id="CHEBI:28938"/>
        <dbReference type="ChEBI" id="CHEBI:29985"/>
        <dbReference type="ChEBI" id="CHEBI:30616"/>
        <dbReference type="ChEBI" id="CHEBI:43474"/>
        <dbReference type="ChEBI" id="CHEBI:58359"/>
        <dbReference type="ChEBI" id="CHEBI:456216"/>
        <dbReference type="EC" id="6.3.1.2"/>
    </reaction>
</comment>
<comment type="cofactor">
    <cofactor evidence="5">
        <name>Mg(2+)</name>
        <dbReference type="ChEBI" id="CHEBI:18420"/>
    </cofactor>
    <text evidence="5">Binds 2 Mg(2+) ions per subunit.</text>
</comment>
<comment type="activity regulation">
    <text evidence="6">The activity of this enzyme could be controlled by adenylation under conditions of abundant glutamine.</text>
</comment>
<comment type="subunit">
    <text evidence="2">Oligomer of 12 subunits arranged in the form of two hexameric ring.</text>
</comment>
<comment type="subcellular location">
    <subcellularLocation>
        <location evidence="5">Cytoplasm</location>
    </subcellularLocation>
</comment>
<comment type="similarity">
    <text evidence="9">Belongs to the glutamine synthetase family.</text>
</comment>
<accession>P0A9C8</accession>
<accession>P06711</accession>
<feature type="initiator methionine" description="Removed" evidence="1">
    <location>
        <position position="1"/>
    </location>
</feature>
<feature type="chain" id="PRO_0000153254" description="Glutamine synthetase">
    <location>
        <begin position="2"/>
        <end position="469"/>
    </location>
</feature>
<feature type="domain" description="GS beta-grasp" evidence="7">
    <location>
        <begin position="13"/>
        <end position="97"/>
    </location>
</feature>
<feature type="domain" description="GS catalytic" evidence="8">
    <location>
        <begin position="105"/>
        <end position="469"/>
    </location>
</feature>
<feature type="binding site" evidence="5">
    <location>
        <position position="130"/>
    </location>
    <ligand>
        <name>Mg(2+)</name>
        <dbReference type="ChEBI" id="CHEBI:18420"/>
        <label>1</label>
    </ligand>
</feature>
<feature type="binding site" evidence="5">
    <location>
        <position position="132"/>
    </location>
    <ligand>
        <name>Mg(2+)</name>
        <dbReference type="ChEBI" id="CHEBI:18420"/>
        <label>2</label>
    </ligand>
</feature>
<feature type="binding site" evidence="2">
    <location>
        <position position="208"/>
    </location>
    <ligand>
        <name>ATP</name>
        <dbReference type="ChEBI" id="CHEBI:30616"/>
    </ligand>
</feature>
<feature type="binding site" evidence="5">
    <location>
        <position position="213"/>
    </location>
    <ligand>
        <name>Mg(2+)</name>
        <dbReference type="ChEBI" id="CHEBI:18420"/>
        <label>2</label>
    </ligand>
</feature>
<feature type="binding site" evidence="5">
    <location>
        <position position="221"/>
    </location>
    <ligand>
        <name>Mg(2+)</name>
        <dbReference type="ChEBI" id="CHEBI:18420"/>
        <label>2</label>
    </ligand>
</feature>
<feature type="binding site" evidence="2">
    <location>
        <begin position="265"/>
        <end position="266"/>
    </location>
    <ligand>
        <name>L-glutamate</name>
        <dbReference type="ChEBI" id="CHEBI:29985"/>
    </ligand>
</feature>
<feature type="binding site" evidence="3">
    <location>
        <position position="266"/>
    </location>
    <ligand>
        <name>L-glutamate</name>
        <dbReference type="ChEBI" id="CHEBI:29985"/>
    </ligand>
</feature>
<feature type="binding site" evidence="5">
    <location>
        <position position="270"/>
    </location>
    <ligand>
        <name>Mg(2+)</name>
        <dbReference type="ChEBI" id="CHEBI:18420"/>
        <label>1</label>
    </ligand>
</feature>
<feature type="binding site" evidence="2">
    <location>
        <begin position="272"/>
        <end position="274"/>
    </location>
    <ligand>
        <name>ATP</name>
        <dbReference type="ChEBI" id="CHEBI:30616"/>
    </ligand>
</feature>
<feature type="binding site" evidence="4">
    <location>
        <position position="274"/>
    </location>
    <ligand>
        <name>ATP</name>
        <dbReference type="ChEBI" id="CHEBI:30616"/>
    </ligand>
</feature>
<feature type="binding site" evidence="2">
    <location>
        <position position="322"/>
    </location>
    <ligand>
        <name>L-glutamate</name>
        <dbReference type="ChEBI" id="CHEBI:29985"/>
    </ligand>
</feature>
<feature type="binding site" evidence="2">
    <location>
        <position position="328"/>
    </location>
    <ligand>
        <name>L-glutamate</name>
        <dbReference type="ChEBI" id="CHEBI:29985"/>
    </ligand>
</feature>
<feature type="binding site" evidence="5">
    <location>
        <position position="340"/>
    </location>
    <ligand>
        <name>ATP</name>
        <dbReference type="ChEBI" id="CHEBI:30616"/>
    </ligand>
</feature>
<feature type="binding site" evidence="5">
    <location>
        <position position="340"/>
    </location>
    <ligand>
        <name>L-glutamate</name>
        <dbReference type="ChEBI" id="CHEBI:29985"/>
    </ligand>
</feature>
<feature type="binding site" evidence="5">
    <location>
        <position position="345"/>
    </location>
    <ligand>
        <name>ATP</name>
        <dbReference type="ChEBI" id="CHEBI:30616"/>
    </ligand>
</feature>
<feature type="binding site" evidence="4">
    <location>
        <position position="353"/>
    </location>
    <ligand>
        <name>ATP</name>
        <dbReference type="ChEBI" id="CHEBI:30616"/>
    </ligand>
</feature>
<feature type="binding site" evidence="5">
    <location>
        <position position="358"/>
    </location>
    <ligand>
        <name>Mg(2+)</name>
        <dbReference type="ChEBI" id="CHEBI:18420"/>
        <label>1</label>
    </ligand>
</feature>
<feature type="binding site" evidence="2">
    <location>
        <position position="360"/>
    </location>
    <ligand>
        <name>L-glutamate</name>
        <dbReference type="ChEBI" id="CHEBI:29985"/>
    </ligand>
</feature>
<feature type="modified residue" description="O-AMP-tyrosine" evidence="5">
    <location>
        <position position="398"/>
    </location>
</feature>
<gene>
    <name evidence="2" type="primary">glnA</name>
    <name type="ordered locus">SF3940</name>
    <name type="ordered locus">S3806</name>
</gene>
<organism>
    <name type="scientific">Shigella flexneri</name>
    <dbReference type="NCBI Taxonomy" id="623"/>
    <lineage>
        <taxon>Bacteria</taxon>
        <taxon>Pseudomonadati</taxon>
        <taxon>Pseudomonadota</taxon>
        <taxon>Gammaproteobacteria</taxon>
        <taxon>Enterobacterales</taxon>
        <taxon>Enterobacteriaceae</taxon>
        <taxon>Shigella</taxon>
    </lineage>
</organism>
<reference key="1">
    <citation type="journal article" date="2002" name="Nucleic Acids Res.">
        <title>Genome sequence of Shigella flexneri 2a: insights into pathogenicity through comparison with genomes of Escherichia coli K12 and O157.</title>
        <authorList>
            <person name="Jin Q."/>
            <person name="Yuan Z."/>
            <person name="Xu J."/>
            <person name="Wang Y."/>
            <person name="Shen Y."/>
            <person name="Lu W."/>
            <person name="Wang J."/>
            <person name="Liu H."/>
            <person name="Yang J."/>
            <person name="Yang F."/>
            <person name="Zhang X."/>
            <person name="Zhang J."/>
            <person name="Yang G."/>
            <person name="Wu H."/>
            <person name="Qu D."/>
            <person name="Dong J."/>
            <person name="Sun L."/>
            <person name="Xue Y."/>
            <person name="Zhao A."/>
            <person name="Gao Y."/>
            <person name="Zhu J."/>
            <person name="Kan B."/>
            <person name="Ding K."/>
            <person name="Chen S."/>
            <person name="Cheng H."/>
            <person name="Yao Z."/>
            <person name="He B."/>
            <person name="Chen R."/>
            <person name="Ma D."/>
            <person name="Qiang B."/>
            <person name="Wen Y."/>
            <person name="Hou Y."/>
            <person name="Yu J."/>
        </authorList>
    </citation>
    <scope>NUCLEOTIDE SEQUENCE [LARGE SCALE GENOMIC DNA]</scope>
    <source>
        <strain>301 / Serotype 2a</strain>
    </source>
</reference>
<reference key="2">
    <citation type="journal article" date="2003" name="Infect. Immun.">
        <title>Complete genome sequence and comparative genomics of Shigella flexneri serotype 2a strain 2457T.</title>
        <authorList>
            <person name="Wei J."/>
            <person name="Goldberg M.B."/>
            <person name="Burland V."/>
            <person name="Venkatesan M.M."/>
            <person name="Deng W."/>
            <person name="Fournier G."/>
            <person name="Mayhew G.F."/>
            <person name="Plunkett G. III"/>
            <person name="Rose D.J."/>
            <person name="Darling A."/>
            <person name="Mau B."/>
            <person name="Perna N.T."/>
            <person name="Payne S.M."/>
            <person name="Runyen-Janecky L.J."/>
            <person name="Zhou S."/>
            <person name="Schwartz D.C."/>
            <person name="Blattner F.R."/>
        </authorList>
    </citation>
    <scope>NUCLEOTIDE SEQUENCE [LARGE SCALE GENOMIC DNA]</scope>
    <source>
        <strain>ATCC 700930 / 2457T / Serotype 2a</strain>
    </source>
</reference>
<dbReference type="EC" id="6.3.1.2" evidence="2"/>
<dbReference type="EMBL" id="AE005674">
    <property type="protein sequence ID" value="AAN45375.1"/>
    <property type="molecule type" value="Genomic_DNA"/>
</dbReference>
<dbReference type="EMBL" id="AE014073">
    <property type="protein sequence ID" value="AAP18823.1"/>
    <property type="molecule type" value="Genomic_DNA"/>
</dbReference>
<dbReference type="RefSeq" id="NP_709668.1">
    <property type="nucleotide sequence ID" value="NC_004337.2"/>
</dbReference>
<dbReference type="RefSeq" id="WP_001271717.1">
    <property type="nucleotide sequence ID" value="NZ_WPGW01000069.1"/>
</dbReference>
<dbReference type="SMR" id="P0A9C8"/>
<dbReference type="STRING" id="198214.SF3940"/>
<dbReference type="PaxDb" id="198214-SF3940"/>
<dbReference type="GeneID" id="1025868"/>
<dbReference type="GeneID" id="93778066"/>
<dbReference type="KEGG" id="sfl:SF3940"/>
<dbReference type="KEGG" id="sfx:S3806"/>
<dbReference type="PATRIC" id="fig|198214.7.peg.4644"/>
<dbReference type="HOGENOM" id="CLU_017290_1_2_6"/>
<dbReference type="Proteomes" id="UP000001006">
    <property type="component" value="Chromosome"/>
</dbReference>
<dbReference type="Proteomes" id="UP000002673">
    <property type="component" value="Chromosome"/>
</dbReference>
<dbReference type="GO" id="GO:0005737">
    <property type="term" value="C:cytoplasm"/>
    <property type="evidence" value="ECO:0007669"/>
    <property type="project" value="UniProtKB-SubCell"/>
</dbReference>
<dbReference type="GO" id="GO:0016020">
    <property type="term" value="C:membrane"/>
    <property type="evidence" value="ECO:0007669"/>
    <property type="project" value="TreeGrafter"/>
</dbReference>
<dbReference type="GO" id="GO:0005524">
    <property type="term" value="F:ATP binding"/>
    <property type="evidence" value="ECO:0007669"/>
    <property type="project" value="UniProtKB-KW"/>
</dbReference>
<dbReference type="GO" id="GO:0004356">
    <property type="term" value="F:glutamine synthetase activity"/>
    <property type="evidence" value="ECO:0007669"/>
    <property type="project" value="UniProtKB-EC"/>
</dbReference>
<dbReference type="GO" id="GO:0046872">
    <property type="term" value="F:metal ion binding"/>
    <property type="evidence" value="ECO:0007669"/>
    <property type="project" value="UniProtKB-KW"/>
</dbReference>
<dbReference type="GO" id="GO:0006542">
    <property type="term" value="P:glutamine biosynthetic process"/>
    <property type="evidence" value="ECO:0007669"/>
    <property type="project" value="InterPro"/>
</dbReference>
<dbReference type="GO" id="GO:0019740">
    <property type="term" value="P:nitrogen utilization"/>
    <property type="evidence" value="ECO:0007669"/>
    <property type="project" value="TreeGrafter"/>
</dbReference>
<dbReference type="FunFam" id="3.10.20.70:FF:000001">
    <property type="entry name" value="Glutamine synthetase"/>
    <property type="match status" value="1"/>
</dbReference>
<dbReference type="FunFam" id="3.30.590.10:FF:000001">
    <property type="entry name" value="Glutamine synthetase"/>
    <property type="match status" value="1"/>
</dbReference>
<dbReference type="Gene3D" id="3.10.20.70">
    <property type="entry name" value="Glutamine synthetase, N-terminal domain"/>
    <property type="match status" value="1"/>
</dbReference>
<dbReference type="Gene3D" id="3.30.590.10">
    <property type="entry name" value="Glutamine synthetase/guanido kinase, catalytic domain"/>
    <property type="match status" value="1"/>
</dbReference>
<dbReference type="InterPro" id="IPR008147">
    <property type="entry name" value="Gln_synt_N"/>
</dbReference>
<dbReference type="InterPro" id="IPR036651">
    <property type="entry name" value="Gln_synt_N_sf"/>
</dbReference>
<dbReference type="InterPro" id="IPR014746">
    <property type="entry name" value="Gln_synth/guanido_kin_cat_dom"/>
</dbReference>
<dbReference type="InterPro" id="IPR008146">
    <property type="entry name" value="Gln_synth_cat_dom"/>
</dbReference>
<dbReference type="InterPro" id="IPR027303">
    <property type="entry name" value="Gln_synth_gly_rich_site"/>
</dbReference>
<dbReference type="InterPro" id="IPR004809">
    <property type="entry name" value="Gln_synth_I"/>
</dbReference>
<dbReference type="InterPro" id="IPR001637">
    <property type="entry name" value="Gln_synth_I_adenylation_site"/>
</dbReference>
<dbReference type="InterPro" id="IPR027302">
    <property type="entry name" value="Gln_synth_N_conserv_site"/>
</dbReference>
<dbReference type="NCBIfam" id="TIGR00653">
    <property type="entry name" value="GlnA"/>
    <property type="match status" value="1"/>
</dbReference>
<dbReference type="NCBIfam" id="NF007006">
    <property type="entry name" value="PRK09469.1"/>
    <property type="match status" value="1"/>
</dbReference>
<dbReference type="PANTHER" id="PTHR43407">
    <property type="entry name" value="GLUTAMINE SYNTHETASE"/>
    <property type="match status" value="1"/>
</dbReference>
<dbReference type="PANTHER" id="PTHR43407:SF2">
    <property type="entry name" value="GLUTAMINE SYNTHETASE"/>
    <property type="match status" value="1"/>
</dbReference>
<dbReference type="Pfam" id="PF00120">
    <property type="entry name" value="Gln-synt_C"/>
    <property type="match status" value="1"/>
</dbReference>
<dbReference type="Pfam" id="PF03951">
    <property type="entry name" value="Gln-synt_N"/>
    <property type="match status" value="1"/>
</dbReference>
<dbReference type="SMART" id="SM01230">
    <property type="entry name" value="Gln-synt_C"/>
    <property type="match status" value="1"/>
</dbReference>
<dbReference type="SUPFAM" id="SSF54368">
    <property type="entry name" value="Glutamine synthetase, N-terminal domain"/>
    <property type="match status" value="1"/>
</dbReference>
<dbReference type="SUPFAM" id="SSF55931">
    <property type="entry name" value="Glutamine synthetase/guanido kinase"/>
    <property type="match status" value="1"/>
</dbReference>
<dbReference type="PROSITE" id="PS00180">
    <property type="entry name" value="GLNA_1"/>
    <property type="match status" value="1"/>
</dbReference>
<dbReference type="PROSITE" id="PS00182">
    <property type="entry name" value="GLNA_ADENYLATION"/>
    <property type="match status" value="1"/>
</dbReference>
<dbReference type="PROSITE" id="PS00181">
    <property type="entry name" value="GLNA_ATP"/>
    <property type="match status" value="1"/>
</dbReference>
<dbReference type="PROSITE" id="PS51986">
    <property type="entry name" value="GS_BETA_GRASP"/>
    <property type="match status" value="1"/>
</dbReference>
<dbReference type="PROSITE" id="PS51987">
    <property type="entry name" value="GS_CATALYTIC"/>
    <property type="match status" value="1"/>
</dbReference>